<accession>Q76II0</accession>
<protein>
    <recommendedName>
        <fullName>Mast/stem cell growth factor receptor Kit</fullName>
        <shortName>SCFR</shortName>
        <ecNumber>2.7.10.1</ecNumber>
    </recommendedName>
    <alternativeName>
        <fullName>Proto-oncogene c-Kit</fullName>
    </alternativeName>
    <alternativeName>
        <fullName>Tyrosine-protein kinase Kit</fullName>
    </alternativeName>
    <cdAntigenName>CD117</cdAntigenName>
</protein>
<evidence type="ECO:0000250" key="1"/>
<evidence type="ECO:0000250" key="2">
    <source>
        <dbReference type="UniProtKB" id="P05532"/>
    </source>
</evidence>
<evidence type="ECO:0000250" key="3">
    <source>
        <dbReference type="UniProtKB" id="P10721"/>
    </source>
</evidence>
<evidence type="ECO:0000255" key="4"/>
<evidence type="ECO:0000255" key="5">
    <source>
        <dbReference type="PROSITE-ProRule" id="PRU00114"/>
    </source>
</evidence>
<evidence type="ECO:0000255" key="6">
    <source>
        <dbReference type="PROSITE-ProRule" id="PRU00159"/>
    </source>
</evidence>
<evidence type="ECO:0000255" key="7">
    <source>
        <dbReference type="PROSITE-ProRule" id="PRU10028"/>
    </source>
</evidence>
<gene>
    <name type="primary">KIT</name>
</gene>
<name>KIT_CALJA</name>
<feature type="signal peptide" evidence="4">
    <location>
        <begin position="1"/>
        <end position="25"/>
    </location>
</feature>
<feature type="chain" id="PRO_0000248275" description="Mast/stem cell growth factor receptor Kit">
    <location>
        <begin position="26"/>
        <end position="972"/>
    </location>
</feature>
<feature type="topological domain" description="Extracellular" evidence="4">
    <location>
        <begin position="26"/>
        <end position="520"/>
    </location>
</feature>
<feature type="transmembrane region" description="Helical" evidence="4">
    <location>
        <begin position="521"/>
        <end position="541"/>
    </location>
</feature>
<feature type="topological domain" description="Cytoplasmic" evidence="4">
    <location>
        <begin position="542"/>
        <end position="972"/>
    </location>
</feature>
<feature type="domain" description="Ig-like C2-type 1">
    <location>
        <begin position="27"/>
        <end position="112"/>
    </location>
</feature>
<feature type="domain" description="Ig-like C2-type 2">
    <location>
        <begin position="121"/>
        <end position="205"/>
    </location>
</feature>
<feature type="domain" description="Ig-like C2-type 3">
    <location>
        <begin position="212"/>
        <end position="308"/>
    </location>
</feature>
<feature type="domain" description="Ig-like C2-type 4">
    <location>
        <begin position="317"/>
        <end position="410"/>
    </location>
</feature>
<feature type="domain" description="Ig-like C2-type 5">
    <location>
        <begin position="413"/>
        <end position="507"/>
    </location>
</feature>
<feature type="domain" description="Protein kinase" evidence="6">
    <location>
        <begin position="585"/>
        <end position="933"/>
    </location>
</feature>
<feature type="region of interest" description="Important for interaction with phosphotyrosine-binding proteins" evidence="1">
    <location>
        <begin position="564"/>
        <end position="566"/>
    </location>
</feature>
<feature type="active site" description="Proton acceptor" evidence="6 7">
    <location>
        <position position="788"/>
    </location>
</feature>
<feature type="binding site" evidence="1">
    <location>
        <position position="564"/>
    </location>
    <ligand>
        <name>Mg(2+)</name>
        <dbReference type="ChEBI" id="CHEBI:18420"/>
    </ligand>
</feature>
<feature type="binding site" evidence="6">
    <location>
        <begin position="592"/>
        <end position="599"/>
    </location>
    <ligand>
        <name>ATP</name>
        <dbReference type="ChEBI" id="CHEBI:30616"/>
    </ligand>
</feature>
<feature type="binding site" evidence="6">
    <location>
        <position position="619"/>
    </location>
    <ligand>
        <name>ATP</name>
        <dbReference type="ChEBI" id="CHEBI:30616"/>
    </ligand>
</feature>
<feature type="binding site" evidence="6">
    <location>
        <begin position="667"/>
        <end position="673"/>
    </location>
    <ligand>
        <name>ATP</name>
        <dbReference type="ChEBI" id="CHEBI:30616"/>
    </ligand>
</feature>
<feature type="binding site" evidence="6">
    <location>
        <position position="792"/>
    </location>
    <ligand>
        <name>ATP</name>
        <dbReference type="ChEBI" id="CHEBI:30616"/>
    </ligand>
</feature>
<feature type="binding site" evidence="1">
    <location>
        <position position="793"/>
    </location>
    <ligand>
        <name>Mg(2+)</name>
        <dbReference type="ChEBI" id="CHEBI:18420"/>
    </ligand>
</feature>
<feature type="binding site" evidence="1">
    <location>
        <position position="806"/>
    </location>
    <ligand>
        <name>Mg(2+)</name>
        <dbReference type="ChEBI" id="CHEBI:18420"/>
    </ligand>
</feature>
<feature type="site" description="Interaction with SH2B2/APS" evidence="1">
    <location>
        <position position="564"/>
    </location>
</feature>
<feature type="site" description="Important for interaction with phosphotyrosine-binding proteins" evidence="1">
    <location>
        <position position="932"/>
    </location>
</feature>
<feature type="site" description="Interaction with SH2B2/APS" evidence="1">
    <location>
        <position position="932"/>
    </location>
</feature>
<feature type="modified residue" description="Phosphotyrosine" evidence="3">
    <location>
        <position position="543"/>
    </location>
</feature>
<feature type="modified residue" description="Phosphotyrosine" evidence="3">
    <location>
        <position position="549"/>
    </location>
</feature>
<feature type="modified residue" description="Phosphotyrosine; by autocatalysis" evidence="3">
    <location>
        <position position="564"/>
    </location>
</feature>
<feature type="modified residue" description="Phosphotyrosine; by autocatalysis" evidence="3">
    <location>
        <position position="566"/>
    </location>
</feature>
<feature type="modified residue" description="Phosphotyrosine; by autocatalysis" evidence="3">
    <location>
        <position position="699"/>
    </location>
</feature>
<feature type="modified residue" description="Phosphotyrosine; by autocatalysis" evidence="3">
    <location>
        <position position="717"/>
    </location>
</feature>
<feature type="modified residue" description="Phosphotyrosine" evidence="3">
    <location>
        <position position="726"/>
    </location>
</feature>
<feature type="modified residue" description="Phosphoserine; by PKC/PRKCA" evidence="3">
    <location>
        <position position="737"/>
    </location>
</feature>
<feature type="modified residue" description="Phosphoserine; by PKC/PRKCA" evidence="3">
    <location>
        <position position="742"/>
    </location>
</feature>
<feature type="modified residue" description="Phosphoserine" evidence="3">
    <location>
        <position position="817"/>
    </location>
</feature>
<feature type="modified residue" description="Phosphotyrosine; by autocatalysis" evidence="3">
    <location>
        <position position="819"/>
    </location>
</feature>
<feature type="modified residue" description="Phosphoserine" evidence="3">
    <location>
        <position position="887"/>
    </location>
</feature>
<feature type="modified residue" description="Phosphotyrosine" evidence="3">
    <location>
        <position position="896"/>
    </location>
</feature>
<feature type="modified residue" description="Phosphotyrosine; by autocatalysis" evidence="3">
    <location>
        <position position="932"/>
    </location>
</feature>
<feature type="modified residue" description="Phosphoserine" evidence="3">
    <location>
        <position position="955"/>
    </location>
</feature>
<feature type="glycosylation site" description="N-linked (GlcNAc...) asparagine" evidence="4">
    <location>
        <position position="130"/>
    </location>
</feature>
<feature type="glycosylation site" description="N-linked (GlcNAc...) asparagine" evidence="4">
    <location>
        <position position="145"/>
    </location>
</feature>
<feature type="glycosylation site" description="N-linked (GlcNAc...) asparagine" evidence="4">
    <location>
        <position position="283"/>
    </location>
</feature>
<feature type="glycosylation site" description="N-linked (GlcNAc...) asparagine" evidence="4">
    <location>
        <position position="300"/>
    </location>
</feature>
<feature type="glycosylation site" description="N-linked (GlcNAc...) asparagine" evidence="4">
    <location>
        <position position="320"/>
    </location>
</feature>
<feature type="glycosylation site" description="N-linked (GlcNAc...) asparagine" evidence="4">
    <location>
        <position position="352"/>
    </location>
</feature>
<feature type="glycosylation site" description="N-linked (GlcNAc...) asparagine" evidence="4">
    <location>
        <position position="367"/>
    </location>
</feature>
<feature type="glycosylation site" description="N-linked (GlcNAc...) asparagine" evidence="4">
    <location>
        <position position="463"/>
    </location>
</feature>
<feature type="glycosylation site" description="N-linked (GlcNAc...) asparagine" evidence="4">
    <location>
        <position position="486"/>
    </location>
</feature>
<feature type="disulfide bond" evidence="5">
    <location>
        <begin position="58"/>
        <end position="97"/>
    </location>
</feature>
<feature type="disulfide bond" evidence="5">
    <location>
        <begin position="136"/>
        <end position="186"/>
    </location>
</feature>
<feature type="disulfide bond" evidence="5">
    <location>
        <begin position="151"/>
        <end position="183"/>
    </location>
</feature>
<feature type="disulfide bond" evidence="5">
    <location>
        <begin position="233"/>
        <end position="290"/>
    </location>
</feature>
<feature type="disulfide bond" evidence="5">
    <location>
        <begin position="428"/>
        <end position="491"/>
    </location>
</feature>
<organism>
    <name type="scientific">Callithrix jacchus</name>
    <name type="common">White-tufted-ear marmoset</name>
    <dbReference type="NCBI Taxonomy" id="9483"/>
    <lineage>
        <taxon>Eukaryota</taxon>
        <taxon>Metazoa</taxon>
        <taxon>Chordata</taxon>
        <taxon>Craniata</taxon>
        <taxon>Vertebrata</taxon>
        <taxon>Euteleostomi</taxon>
        <taxon>Mammalia</taxon>
        <taxon>Eutheria</taxon>
        <taxon>Euarchontoglires</taxon>
        <taxon>Primates</taxon>
        <taxon>Haplorrhini</taxon>
        <taxon>Platyrrhini</taxon>
        <taxon>Cebidae</taxon>
        <taxon>Callitrichinae</taxon>
        <taxon>Callithrix</taxon>
        <taxon>Callithrix</taxon>
    </lineage>
</organism>
<proteinExistence type="evidence at transcript level"/>
<keyword id="KW-0067">ATP-binding</keyword>
<keyword id="KW-1003">Cell membrane</keyword>
<keyword id="KW-1015">Disulfide bond</keyword>
<keyword id="KW-0325">Glycoprotein</keyword>
<keyword id="KW-0393">Immunoglobulin domain</keyword>
<keyword id="KW-0418">Kinase</keyword>
<keyword id="KW-0460">Magnesium</keyword>
<keyword id="KW-0472">Membrane</keyword>
<keyword id="KW-0479">Metal-binding</keyword>
<keyword id="KW-0547">Nucleotide-binding</keyword>
<keyword id="KW-0597">Phosphoprotein</keyword>
<keyword id="KW-0656">Proto-oncogene</keyword>
<keyword id="KW-0675">Receptor</keyword>
<keyword id="KW-1185">Reference proteome</keyword>
<keyword id="KW-0677">Repeat</keyword>
<keyword id="KW-0732">Signal</keyword>
<keyword id="KW-0808">Transferase</keyword>
<keyword id="KW-0812">Transmembrane</keyword>
<keyword id="KW-1133">Transmembrane helix</keyword>
<keyword id="KW-0829">Tyrosine-protein kinase</keyword>
<keyword id="KW-0832">Ubl conjugation</keyword>
<sequence>MRGARGAWDFLCVLLLLLRVQTGSSQPSVSPEEASPPFIDPAKSELIVSVGDEIRLFCNDPGFVKWTFEVLDQMNENKQKEWIMQKAEATNTGKYTCTNKHGLSSSIYVFVRDPDKLFLVDRSLYGKEDNDTLVRCPLTDPEVTNYSLKGCQGKPIPKDLRFVPDPKAGITIKNVKRAYHRLCLHCSADRKGQSKLSEKFILKVRPAFKAVPVVSVSKASYLLREGEEFTVTCTIKDVSSSVYSSWKKENSPTKLQEKYNSWHQGDFNYERQATLTISSVRVNDSGVFMCYASNTFGSANVTTTLEVVDKGFINIFPMINTTVFVNDGENVDLIVEYEAFPRPEHQQWIYMNRTFTDKWEDYPKSENESNIRYVSELHLTRLKDTEGGTYTFLVSNSDVSSSIAFTVYVNTKPEILTYDRLMNGMLQCVAAGFPEPTIDWYFCPGTEQRCSAPVLPVDVQIQNTSGPPFGKLVVQSSIDSSAFKHNGTVECKAYNDVGKTSAYFNFAFKEQIQPHTLFTPLLIGFVVVAGMMCIIVMILTYKYLQKPMYEVQWKVVEEINGNNYVYIDPTQLPYDHKWEFPRNRLSFGKTLGAGAFGKVVEATAYGLIKSDTAMTVAVKMLKPSAHLTEREALMSELKVLSYLGNHMNIVNLLGACTIGGPTLVITEYCCYGDLLNFLRRKRDSFICSKQEDHAEAALYKNLLHSKESSCSDSTNEYMDMKPGVSYVVPTKAEKRRSARVGSYIERDVTPAIMEDDELALDLEDLLSFSYQVAKGMAFLASKNCIHRDLAARNILLTHGRITKICDFGLARDIKNDSNYVVKGNARLPVKWMAPESIFNCVYTFESDVWSYGIFLWELFSLGSSPYPGMPVDSKFYKMIKEGFRMLSPEHAPAEMYDIMKTCWDADPLKRPTFKQIVQLIEKQISESTNHIYSNLTNCSPSQQKPVVDHSVRINSVGSTASSSQPLLVRDDV</sequence>
<comment type="function">
    <text evidence="1">Tyrosine-protein kinase that acts as a cell-surface receptor for the cytokine KITLG/SCF and plays an essential role in the regulation of cell survival and proliferation, hematopoiesis, stem cell maintenance, gametogenesis, mast cell development, migration and function, and in melanogenesis. In response to KITLG/SCF binding, KIT can activate several signaling pathways. Phosphorylates PIK3R1, PLCG1, SH2B2/APS and CBL. Activates the AKT1 signaling pathway by phosphorylation of PIK3R1, the regulatory subunit of phosphatidylinositol 3-kinase. Activated KIT also transmits signals via GRB2 and activation of RAS, RAF1 and the MAP kinases MAPK1/ERK2 and/or MAPK3/ERK1. Promotes activation of STAT family members STAT1, STAT3, STAT5A and STAT5B. Activation of PLCG1 leads to the production of the cellular signaling molecules diacylglycerol and inositol 1,4,5-trisphosphate. KIT signaling is modulated by protein phosphatases, and by rapid internalization and degradation of the receptor. Activated KIT promotes phosphorylation of the protein phosphatases PTPN6/SHP-1 and PTPRU, and of the transcription factors STAT1, STAT3, STAT5A and STAT5B. Promotes phosphorylation of PIK3R1, CBL, CRK (isoform Crk-II), LYN, MAPK1/ERK2 and/or MAPK3/ERK1, PLCG1, SRC and SHC1 (By similarity).</text>
</comment>
<comment type="catalytic activity">
    <reaction evidence="7">
        <text>L-tyrosyl-[protein] + ATP = O-phospho-L-tyrosyl-[protein] + ADP + H(+)</text>
        <dbReference type="Rhea" id="RHEA:10596"/>
        <dbReference type="Rhea" id="RHEA-COMP:10136"/>
        <dbReference type="Rhea" id="RHEA-COMP:20101"/>
        <dbReference type="ChEBI" id="CHEBI:15378"/>
        <dbReference type="ChEBI" id="CHEBI:30616"/>
        <dbReference type="ChEBI" id="CHEBI:46858"/>
        <dbReference type="ChEBI" id="CHEBI:61978"/>
        <dbReference type="ChEBI" id="CHEBI:456216"/>
        <dbReference type="EC" id="2.7.10.1"/>
    </reaction>
</comment>
<comment type="activity regulation">
    <text evidence="1">Present in an inactive conformation in the absence of bound ligand. KITLG/SCF binding leads to dimerization and activation by autophosphorylation on tyrosine residues. Activity is down-regulated by PRKCA-mediated phosphorylation on serine residues (By similarity).</text>
</comment>
<comment type="subunit">
    <text evidence="2 3">Monomer in the absence of bound KITLG/SCF. Homodimer in the presence of bound KITLG/SCF, forming a heterotetramer with two KITLG/SCF molecules. Interacts (via phosphorylated tyrosine residues) with the adapter proteins GRB2 and GRB7 (via SH2 domain), and SH2B2/APS. Interacts (via C-terminus) with MPDZ (via the tenth PDZ domain). Interacts (via phosphorylated tyrosine residues) with PIK3R1 and PIK3CD. Interacts (via phosphorylated tyrosine) with CRK (isoform Crk-II), FYN, SHC1 and MATK/CHK (via SH2 domain). Interacts with LYN and FES/FPS. Interacts (via phosphorylated tyrosine residues) with the protein phosphatases PTPN6/SHP-1 (via SH2 domain), PTPN11/SHP-2 (via SH2 domain) and PTPRU. Interacts with PLCG1. Interacts with DOK1 and TEC. Interacts with IL1RAP (independent of stimulation with KITLG/SCF). A mast cell-specific KITLG/SCF-induced interleukin-33 signaling complex contains IL1RL1, IL1RAP, KIT and MYD88 (By similarity).</text>
</comment>
<comment type="subcellular location">
    <subcellularLocation>
        <location>Cell membrane</location>
        <topology>Single-pass type I membrane protein</topology>
    </subcellularLocation>
</comment>
<comment type="PTM">
    <text evidence="1">Ubiquitinated by SOCS6. KIT is rapidly ubiquitinated after autophosphorylation induced by KITLG/SCF binding, leading to internalization and degradation.</text>
</comment>
<comment type="PTM">
    <text evidence="1">Autophosphorylated on tyrosine residues. KITLG/SCF binding promotes autophosphorylation. Phosphorylated tyrosine residues are important for interaction with specific binding partners (By similarity).</text>
</comment>
<comment type="miscellaneous">
    <text evidence="1">Numerous proteins are phosphorylated in response to KIT signaling, but it is not evident to determine which are directly phosphorylated by KIT under in vivo conditions.</text>
</comment>
<comment type="similarity">
    <text evidence="6">Belongs to the protein kinase superfamily. Tyr protein kinase family. CSF-1/PDGF receptor subfamily.</text>
</comment>
<dbReference type="EC" id="2.7.10.1"/>
<dbReference type="EMBL" id="AB097502">
    <property type="protein sequence ID" value="BAD04018.1"/>
    <property type="molecule type" value="mRNA"/>
</dbReference>
<dbReference type="RefSeq" id="NP_001171967.1">
    <property type="nucleotide sequence ID" value="NM_001185038.1"/>
</dbReference>
<dbReference type="SMR" id="Q76II0"/>
<dbReference type="FunCoup" id="Q76II0">
    <property type="interactions" value="1020"/>
</dbReference>
<dbReference type="STRING" id="9483.ENSCJAP00000054263"/>
<dbReference type="GlyCosmos" id="Q76II0">
    <property type="glycosylation" value="9 sites, No reported glycans"/>
</dbReference>
<dbReference type="GeneID" id="100411615"/>
<dbReference type="KEGG" id="cjc:100411615"/>
<dbReference type="CTD" id="3815"/>
<dbReference type="eggNOG" id="KOG0200">
    <property type="taxonomic scope" value="Eukaryota"/>
</dbReference>
<dbReference type="InParanoid" id="Q76II0"/>
<dbReference type="OrthoDB" id="6077854at2759"/>
<dbReference type="Proteomes" id="UP000008225">
    <property type="component" value="Unplaced"/>
</dbReference>
<dbReference type="GO" id="GO:0005886">
    <property type="term" value="C:plasma membrane"/>
    <property type="evidence" value="ECO:0007669"/>
    <property type="project" value="UniProtKB-SubCell"/>
</dbReference>
<dbReference type="GO" id="GO:0043235">
    <property type="term" value="C:receptor complex"/>
    <property type="evidence" value="ECO:0007669"/>
    <property type="project" value="TreeGrafter"/>
</dbReference>
<dbReference type="GO" id="GO:0005524">
    <property type="term" value="F:ATP binding"/>
    <property type="evidence" value="ECO:0007669"/>
    <property type="project" value="UniProtKB-KW"/>
</dbReference>
<dbReference type="GO" id="GO:0019955">
    <property type="term" value="F:cytokine binding"/>
    <property type="evidence" value="ECO:0000250"/>
    <property type="project" value="UniProtKB"/>
</dbReference>
<dbReference type="GO" id="GO:0019838">
    <property type="term" value="F:growth factor binding"/>
    <property type="evidence" value="ECO:0007669"/>
    <property type="project" value="TreeGrafter"/>
</dbReference>
<dbReference type="GO" id="GO:0046872">
    <property type="term" value="F:metal ion binding"/>
    <property type="evidence" value="ECO:0007669"/>
    <property type="project" value="UniProtKB-KW"/>
</dbReference>
<dbReference type="GO" id="GO:0004714">
    <property type="term" value="F:transmembrane receptor protein tyrosine kinase activity"/>
    <property type="evidence" value="ECO:0000250"/>
    <property type="project" value="UniProtKB"/>
</dbReference>
<dbReference type="GO" id="GO:0030036">
    <property type="term" value="P:actin cytoskeleton organization"/>
    <property type="evidence" value="ECO:0000250"/>
    <property type="project" value="UniProtKB"/>
</dbReference>
<dbReference type="GO" id="GO:0060326">
    <property type="term" value="P:cell chemotaxis"/>
    <property type="evidence" value="ECO:0000250"/>
    <property type="project" value="UniProtKB"/>
</dbReference>
<dbReference type="GO" id="GO:0019221">
    <property type="term" value="P:cytokine-mediated signaling pathway"/>
    <property type="evidence" value="ECO:0000250"/>
    <property type="project" value="UniProtKB"/>
</dbReference>
<dbReference type="GO" id="GO:0050910">
    <property type="term" value="P:detection of mechanical stimulus involved in sensory perception of sound"/>
    <property type="evidence" value="ECO:0000250"/>
    <property type="project" value="UniProtKB"/>
</dbReference>
<dbReference type="GO" id="GO:0048565">
    <property type="term" value="P:digestive tract development"/>
    <property type="evidence" value="ECO:0000250"/>
    <property type="project" value="UniProtKB"/>
</dbReference>
<dbReference type="GO" id="GO:0035162">
    <property type="term" value="P:embryonic hemopoiesis"/>
    <property type="evidence" value="ECO:0000250"/>
    <property type="project" value="UniProtKB"/>
</dbReference>
<dbReference type="GO" id="GO:0030218">
    <property type="term" value="P:erythrocyte differentiation"/>
    <property type="evidence" value="ECO:0000250"/>
    <property type="project" value="UniProtKB"/>
</dbReference>
<dbReference type="GO" id="GO:0038162">
    <property type="term" value="P:erythropoietin-mediated signaling pathway"/>
    <property type="evidence" value="ECO:0000250"/>
    <property type="project" value="UniProtKB"/>
</dbReference>
<dbReference type="GO" id="GO:0038093">
    <property type="term" value="P:Fc receptor signaling pathway"/>
    <property type="evidence" value="ECO:0000250"/>
    <property type="project" value="UniProtKB"/>
</dbReference>
<dbReference type="GO" id="GO:0002244">
    <property type="term" value="P:hematopoietic progenitor cell differentiation"/>
    <property type="evidence" value="ECO:0007669"/>
    <property type="project" value="TreeGrafter"/>
</dbReference>
<dbReference type="GO" id="GO:0002327">
    <property type="term" value="P:immature B cell differentiation"/>
    <property type="evidence" value="ECO:0000250"/>
    <property type="project" value="UniProtKB"/>
</dbReference>
<dbReference type="GO" id="GO:0006954">
    <property type="term" value="P:inflammatory response"/>
    <property type="evidence" value="ECO:0000250"/>
    <property type="project" value="UniProtKB"/>
</dbReference>
<dbReference type="GO" id="GO:0038109">
    <property type="term" value="P:Kit signaling pathway"/>
    <property type="evidence" value="ECO:0000250"/>
    <property type="project" value="UniProtKB"/>
</dbReference>
<dbReference type="GO" id="GO:0030032">
    <property type="term" value="P:lamellipodium assembly"/>
    <property type="evidence" value="ECO:0000250"/>
    <property type="project" value="UniProtKB"/>
</dbReference>
<dbReference type="GO" id="GO:0043303">
    <property type="term" value="P:mast cell degranulation"/>
    <property type="evidence" value="ECO:0000250"/>
    <property type="project" value="UniProtKB"/>
</dbReference>
<dbReference type="GO" id="GO:0060374">
    <property type="term" value="P:mast cell differentiation"/>
    <property type="evidence" value="ECO:0000250"/>
    <property type="project" value="UniProtKB"/>
</dbReference>
<dbReference type="GO" id="GO:0035855">
    <property type="term" value="P:megakaryocyte development"/>
    <property type="evidence" value="ECO:0000250"/>
    <property type="project" value="UniProtKB"/>
</dbReference>
<dbReference type="GO" id="GO:0097326">
    <property type="term" value="P:melanocyte adhesion"/>
    <property type="evidence" value="ECO:0000250"/>
    <property type="project" value="UniProtKB"/>
</dbReference>
<dbReference type="GO" id="GO:0030318">
    <property type="term" value="P:melanocyte differentiation"/>
    <property type="evidence" value="ECO:0000250"/>
    <property type="project" value="UniProtKB"/>
</dbReference>
<dbReference type="GO" id="GO:0097324">
    <property type="term" value="P:melanocyte migration"/>
    <property type="evidence" value="ECO:0000250"/>
    <property type="project" value="UniProtKB"/>
</dbReference>
<dbReference type="GO" id="GO:0001541">
    <property type="term" value="P:ovarian follicle development"/>
    <property type="evidence" value="ECO:0000250"/>
    <property type="project" value="UniProtKB"/>
</dbReference>
<dbReference type="GO" id="GO:0043473">
    <property type="term" value="P:pigmentation"/>
    <property type="evidence" value="ECO:0000250"/>
    <property type="project" value="UniProtKB"/>
</dbReference>
<dbReference type="GO" id="GO:0030335">
    <property type="term" value="P:positive regulation of cell migration"/>
    <property type="evidence" value="ECO:0007669"/>
    <property type="project" value="TreeGrafter"/>
</dbReference>
<dbReference type="GO" id="GO:0002732">
    <property type="term" value="P:positive regulation of dendritic cell cytokine production"/>
    <property type="evidence" value="ECO:0000250"/>
    <property type="project" value="UniProtKB"/>
</dbReference>
<dbReference type="GO" id="GO:0032765">
    <property type="term" value="P:positive regulation of mast cell cytokine production"/>
    <property type="evidence" value="ECO:0000250"/>
    <property type="project" value="UniProtKB"/>
</dbReference>
<dbReference type="GO" id="GO:0046427">
    <property type="term" value="P:positive regulation of receptor signaling pathway via JAK-STAT"/>
    <property type="evidence" value="ECO:0007669"/>
    <property type="project" value="TreeGrafter"/>
</dbReference>
<dbReference type="GO" id="GO:0042127">
    <property type="term" value="P:regulation of cell population proliferation"/>
    <property type="evidence" value="ECO:0007669"/>
    <property type="project" value="UniProtKB-ARBA"/>
</dbReference>
<dbReference type="GO" id="GO:0008360">
    <property type="term" value="P:regulation of cell shape"/>
    <property type="evidence" value="ECO:0000250"/>
    <property type="project" value="UniProtKB"/>
</dbReference>
<dbReference type="GO" id="GO:0007283">
    <property type="term" value="P:spermatogenesis"/>
    <property type="evidence" value="ECO:0000250"/>
    <property type="project" value="UniProtKB"/>
</dbReference>
<dbReference type="GO" id="GO:0048863">
    <property type="term" value="P:stem cell differentiation"/>
    <property type="evidence" value="ECO:0000250"/>
    <property type="project" value="UniProtKB"/>
</dbReference>
<dbReference type="GO" id="GO:0030217">
    <property type="term" value="P:T cell differentiation"/>
    <property type="evidence" value="ECO:0000250"/>
    <property type="project" value="UniProtKB"/>
</dbReference>
<dbReference type="CDD" id="cd00096">
    <property type="entry name" value="Ig"/>
    <property type="match status" value="2"/>
</dbReference>
<dbReference type="CDD" id="cd05860">
    <property type="entry name" value="IgI_4_SCFR"/>
    <property type="match status" value="1"/>
</dbReference>
<dbReference type="CDD" id="cd05104">
    <property type="entry name" value="PTKc_Kit"/>
    <property type="match status" value="1"/>
</dbReference>
<dbReference type="FunFam" id="1.10.510.10:FF:000177">
    <property type="entry name" value="Mast/stem cell growth factor receptor"/>
    <property type="match status" value="1"/>
</dbReference>
<dbReference type="FunFam" id="2.60.40.10:FF:000422">
    <property type="entry name" value="Mast/stem cell growth factor receptor"/>
    <property type="match status" value="1"/>
</dbReference>
<dbReference type="FunFam" id="2.60.40.10:FF:000429">
    <property type="entry name" value="Mast/stem cell growth factor receptor"/>
    <property type="match status" value="1"/>
</dbReference>
<dbReference type="FunFam" id="2.60.40.10:FF:000469">
    <property type="entry name" value="Mast/stem cell growth factor receptor"/>
    <property type="match status" value="1"/>
</dbReference>
<dbReference type="FunFam" id="2.60.40.10:FF:000544">
    <property type="entry name" value="Mast/stem cell growth factor receptor"/>
    <property type="match status" value="1"/>
</dbReference>
<dbReference type="FunFam" id="2.60.40.10:FF:000815">
    <property type="entry name" value="Mast/stem cell growth factor receptor"/>
    <property type="match status" value="1"/>
</dbReference>
<dbReference type="FunFam" id="3.30.200.20:FF:000025">
    <property type="entry name" value="Platelet-derived growth factor receptor alpha"/>
    <property type="match status" value="1"/>
</dbReference>
<dbReference type="Gene3D" id="2.60.40.10">
    <property type="entry name" value="Immunoglobulins"/>
    <property type="match status" value="5"/>
</dbReference>
<dbReference type="Gene3D" id="3.30.200.20">
    <property type="entry name" value="Phosphorylase Kinase, domain 1"/>
    <property type="match status" value="1"/>
</dbReference>
<dbReference type="Gene3D" id="1.10.510.10">
    <property type="entry name" value="Transferase(Phosphotransferase) domain 1"/>
    <property type="match status" value="1"/>
</dbReference>
<dbReference type="InterPro" id="IPR007110">
    <property type="entry name" value="Ig-like_dom"/>
</dbReference>
<dbReference type="InterPro" id="IPR036179">
    <property type="entry name" value="Ig-like_dom_sf"/>
</dbReference>
<dbReference type="InterPro" id="IPR013783">
    <property type="entry name" value="Ig-like_fold"/>
</dbReference>
<dbReference type="InterPro" id="IPR003599">
    <property type="entry name" value="Ig_sub"/>
</dbReference>
<dbReference type="InterPro" id="IPR003598">
    <property type="entry name" value="Ig_sub2"/>
</dbReference>
<dbReference type="InterPro" id="IPR013151">
    <property type="entry name" value="Immunoglobulin_dom"/>
</dbReference>
<dbReference type="InterPro" id="IPR011009">
    <property type="entry name" value="Kinase-like_dom_sf"/>
</dbReference>
<dbReference type="InterPro" id="IPR000719">
    <property type="entry name" value="Prot_kinase_dom"/>
</dbReference>
<dbReference type="InterPro" id="IPR017441">
    <property type="entry name" value="Protein_kinase_ATP_BS"/>
</dbReference>
<dbReference type="InterPro" id="IPR050122">
    <property type="entry name" value="RTK"/>
</dbReference>
<dbReference type="InterPro" id="IPR027263">
    <property type="entry name" value="SCGF_receptor"/>
</dbReference>
<dbReference type="InterPro" id="IPR001245">
    <property type="entry name" value="Ser-Thr/Tyr_kinase_cat_dom"/>
</dbReference>
<dbReference type="InterPro" id="IPR008266">
    <property type="entry name" value="Tyr_kinase_AS"/>
</dbReference>
<dbReference type="InterPro" id="IPR020635">
    <property type="entry name" value="Tyr_kinase_cat_dom"/>
</dbReference>
<dbReference type="InterPro" id="IPR001824">
    <property type="entry name" value="Tyr_kinase_rcpt_3_CS"/>
</dbReference>
<dbReference type="PANTHER" id="PTHR24416:SF46">
    <property type="entry name" value="MAST_STEM CELL GROWTH FACTOR RECEPTOR KIT"/>
    <property type="match status" value="1"/>
</dbReference>
<dbReference type="PANTHER" id="PTHR24416">
    <property type="entry name" value="TYROSINE-PROTEIN KINASE RECEPTOR"/>
    <property type="match status" value="1"/>
</dbReference>
<dbReference type="Pfam" id="PF00047">
    <property type="entry name" value="ig"/>
    <property type="match status" value="1"/>
</dbReference>
<dbReference type="Pfam" id="PF25305">
    <property type="entry name" value="Ig_PDGFR_d4"/>
    <property type="match status" value="1"/>
</dbReference>
<dbReference type="Pfam" id="PF07714">
    <property type="entry name" value="PK_Tyr_Ser-Thr"/>
    <property type="match status" value="1"/>
</dbReference>
<dbReference type="PIRSF" id="PIRSF500951">
    <property type="entry name" value="SCGF_recepter"/>
    <property type="match status" value="1"/>
</dbReference>
<dbReference type="PIRSF" id="PIRSF000615">
    <property type="entry name" value="TyrPK_CSF1-R"/>
    <property type="match status" value="1"/>
</dbReference>
<dbReference type="PRINTS" id="PR01832">
    <property type="entry name" value="VEGFRECEPTOR"/>
</dbReference>
<dbReference type="SMART" id="SM00409">
    <property type="entry name" value="IG"/>
    <property type="match status" value="3"/>
</dbReference>
<dbReference type="SMART" id="SM00408">
    <property type="entry name" value="IGc2"/>
    <property type="match status" value="2"/>
</dbReference>
<dbReference type="SMART" id="SM00219">
    <property type="entry name" value="TyrKc"/>
    <property type="match status" value="1"/>
</dbReference>
<dbReference type="SUPFAM" id="SSF48726">
    <property type="entry name" value="Immunoglobulin"/>
    <property type="match status" value="3"/>
</dbReference>
<dbReference type="SUPFAM" id="SSF56112">
    <property type="entry name" value="Protein kinase-like (PK-like)"/>
    <property type="match status" value="1"/>
</dbReference>
<dbReference type="PROSITE" id="PS50835">
    <property type="entry name" value="IG_LIKE"/>
    <property type="match status" value="1"/>
</dbReference>
<dbReference type="PROSITE" id="PS00107">
    <property type="entry name" value="PROTEIN_KINASE_ATP"/>
    <property type="match status" value="1"/>
</dbReference>
<dbReference type="PROSITE" id="PS50011">
    <property type="entry name" value="PROTEIN_KINASE_DOM"/>
    <property type="match status" value="1"/>
</dbReference>
<dbReference type="PROSITE" id="PS00109">
    <property type="entry name" value="PROTEIN_KINASE_TYR"/>
    <property type="match status" value="1"/>
</dbReference>
<dbReference type="PROSITE" id="PS00240">
    <property type="entry name" value="RECEPTOR_TYR_KIN_III"/>
    <property type="match status" value="1"/>
</dbReference>
<reference key="1">
    <citation type="submission" date="2002-12" db="EMBL/GenBank/DDBJ databases">
        <title>Cloning of c-kit cDNA of common marmoset.</title>
        <authorList>
            <person name="Izawa K."/>
        </authorList>
    </citation>
    <scope>NUCLEOTIDE SEQUENCE [MRNA]</scope>
</reference>